<sequence length="361" mass="42320">MSLSLGDIKFPDNWDLIPNEKNYIDYVYKESIELEVWRPNNKRDLMAHNNVVSLAKYFWPHVDFNRLVMGGELMVWFFSFDDVLDAGIYTDEKQMDLVKRMDNVFINGTVESDATGPEKMALHLRKKCEVMCGKRRKDTFNRFISSCVQWVDSIIPFNKLRSAQGTSPHLELYSYLRKVNIGAYPCVTLTEVMLDHEIEYYIWSDPKWIKMNEDIAIITTLINDLVSYEKEVNDQAGDLNPLYFLQNQKNIPLPDSYKQVVDLIDFWVKDYQTMEQSLLNEMEFKDSKQRSDMEFILEHLRYLASGSKKWSMQTPRYCSPTSPFIEMRTKPSTPVMNSTKKQKIDHVPSQSFISTPIDLNN</sequence>
<protein>
    <recommendedName>
        <fullName evidence="4">Terpene synthase 6</fullName>
        <ecNumber evidence="2 3">4.2.3.160</ecNumber>
    </recommendedName>
</protein>
<gene>
    <name evidence="4" type="primary">TPS6</name>
    <name type="ORF">DDB0186155</name>
</gene>
<keyword id="KW-0456">Lyase</keyword>
<keyword id="KW-0479">Metal-binding</keyword>
<dbReference type="EC" id="4.2.3.160" evidence="2 3"/>
<dbReference type="EMBL" id="KX364379">
    <property type="protein sequence ID" value="APC23390.1"/>
    <property type="molecule type" value="mRNA"/>
</dbReference>
<dbReference type="EMBL" id="AAFI01000113">
    <property type="protein sequence ID" value="EAL65123.1"/>
    <property type="molecule type" value="Genomic_DNA"/>
</dbReference>
<dbReference type="RefSeq" id="XP_638489.1">
    <property type="nucleotide sequence ID" value="XM_633397.1"/>
</dbReference>
<dbReference type="SMR" id="Q54P86"/>
<dbReference type="STRING" id="44689.Q54P86"/>
<dbReference type="PaxDb" id="44689-DDB0186155"/>
<dbReference type="KEGG" id="ddi:DDB_G0284707"/>
<dbReference type="dictyBase" id="DDB_G0284707">
    <property type="gene designation" value="tps6"/>
</dbReference>
<dbReference type="VEuPathDB" id="AmoebaDB:DDB_G0284707"/>
<dbReference type="eggNOG" id="ENOG502SDMI">
    <property type="taxonomic scope" value="Eukaryota"/>
</dbReference>
<dbReference type="HOGENOM" id="CLU_070708_0_0_1"/>
<dbReference type="InParanoid" id="Q54P86"/>
<dbReference type="OMA" id="WSMQTPR"/>
<dbReference type="BRENDA" id="4.2.3.160">
    <property type="organism ID" value="1939"/>
</dbReference>
<dbReference type="PRO" id="PR:Q54P86"/>
<dbReference type="GO" id="GO:0061923">
    <property type="term" value="F:(2S,3R,6S,9S)-(-)-protoillud-7-ene synthase activity"/>
    <property type="evidence" value="ECO:0000314"/>
    <property type="project" value="dictyBase"/>
</dbReference>
<dbReference type="GO" id="GO:0046872">
    <property type="term" value="F:metal ion binding"/>
    <property type="evidence" value="ECO:0007669"/>
    <property type="project" value="UniProtKB-KW"/>
</dbReference>
<dbReference type="GO" id="GO:0010334">
    <property type="term" value="F:sesquiterpene synthase activity"/>
    <property type="evidence" value="ECO:0000314"/>
    <property type="project" value="dictyBase"/>
</dbReference>
<dbReference type="GO" id="GO:0010333">
    <property type="term" value="F:terpene synthase activity"/>
    <property type="evidence" value="ECO:0000318"/>
    <property type="project" value="GO_Central"/>
</dbReference>
<dbReference type="GO" id="GO:0051762">
    <property type="term" value="P:sesquiterpene biosynthetic process"/>
    <property type="evidence" value="ECO:0000304"/>
    <property type="project" value="dictyBase"/>
</dbReference>
<dbReference type="FunFam" id="1.10.600.10:FF:000047">
    <property type="entry name" value="Terpene synthase"/>
    <property type="match status" value="1"/>
</dbReference>
<dbReference type="Gene3D" id="1.10.600.10">
    <property type="entry name" value="Farnesyl Diphosphate Synthase"/>
    <property type="match status" value="1"/>
</dbReference>
<dbReference type="InterPro" id="IPR008949">
    <property type="entry name" value="Isoprenoid_synthase_dom_sf"/>
</dbReference>
<dbReference type="InterPro" id="IPR034686">
    <property type="entry name" value="Terpene_cyclase-like_2"/>
</dbReference>
<dbReference type="PANTHER" id="PTHR35201">
    <property type="entry name" value="TERPENE SYNTHASE"/>
    <property type="match status" value="1"/>
</dbReference>
<dbReference type="PANTHER" id="PTHR35201:SF3">
    <property type="entry name" value="TERPENE SYNTHASE 2-RELATED"/>
    <property type="match status" value="1"/>
</dbReference>
<dbReference type="Pfam" id="PF19086">
    <property type="entry name" value="Terpene_syn_C_2"/>
    <property type="match status" value="1"/>
</dbReference>
<dbReference type="SUPFAM" id="SSF48576">
    <property type="entry name" value="Terpenoid synthases"/>
    <property type="match status" value="1"/>
</dbReference>
<evidence type="ECO:0000250" key="1">
    <source>
        <dbReference type="UniProtKB" id="Q54BE5"/>
    </source>
</evidence>
<evidence type="ECO:0000269" key="2">
    <source>
    </source>
</evidence>
<evidence type="ECO:0000269" key="3">
    <source>
    </source>
</evidence>
<evidence type="ECO:0000303" key="4">
    <source>
    </source>
</evidence>
<evidence type="ECO:0000305" key="5"/>
<evidence type="ECO:0000305" key="6">
    <source>
    </source>
</evidence>
<proteinExistence type="evidence at protein level"/>
<comment type="function">
    <text evidence="2">Terpene synthase that converts its substrate farnesyl diphosphate (FPP) into the sesquiterpene (2S,3R,6S,9S)-(-)-protoillud-7-ene.</text>
</comment>
<comment type="catalytic activity">
    <reaction evidence="3">
        <text>(2E,6E)-farnesyl diphosphate = (2S,3R,6S,9S)-(-)-protoillud-7-ene + diphosphate</text>
        <dbReference type="Rhea" id="RHEA:53628"/>
        <dbReference type="ChEBI" id="CHEBI:33019"/>
        <dbReference type="ChEBI" id="CHEBI:137530"/>
        <dbReference type="ChEBI" id="CHEBI:175763"/>
        <dbReference type="EC" id="4.2.3.160"/>
    </reaction>
    <physiologicalReaction direction="left-to-right" evidence="3">
        <dbReference type="Rhea" id="RHEA:53629"/>
    </physiologicalReaction>
</comment>
<comment type="induction">
    <text evidence="2">Expression is detectable but at low levels in vegetatively growing cells and increases during development induced by starvation (PubMed:27790999). Expression is highest during he ultimate stage of mature fruiting body (approximately 24 hours after induction) (PubMed:27790999).</text>
</comment>
<comment type="domain">
    <text evidence="6">Contains several highly conserved motifs that are important for catalytic activity including the aspartate-rich 'DDxx(x)D/E' motif and the 'NDxxSxxxD/E' motif, both of which are involved in complexing metal ions to coordinate the binding of the isoprenyl diphosphate substrate in the active site.</text>
</comment>
<comment type="similarity">
    <text evidence="5">Belongs to the terpene synthase family.</text>
</comment>
<feature type="chain" id="PRO_0000456822" description="Terpene synthase 6">
    <location>
        <begin position="1"/>
        <end position="361"/>
    </location>
</feature>
<feature type="short sequence motif" description="DDxx(x)D/E motif" evidence="1">
    <location>
        <begin position="81"/>
        <end position="86"/>
    </location>
</feature>
<feature type="short sequence motif" description="NDxxSxxxD/E motif" evidence="1">
    <location>
        <begin position="223"/>
        <end position="231"/>
    </location>
</feature>
<reference key="1">
    <citation type="journal article" date="2016" name="Proc. Natl. Acad. Sci. U.S.A.">
        <title>Terpene synthase genes in eukaryotes beyond plants and fungi: Occurrence in social amoebae.</title>
        <authorList>
            <person name="Chen X."/>
            <person name="Koellner T.G."/>
            <person name="Jia Q."/>
            <person name="Norris A."/>
            <person name="Santhanam B."/>
            <person name="Rabe P."/>
            <person name="Dickschat J.S."/>
            <person name="Shaulsky G."/>
            <person name="Gershenzon J."/>
            <person name="Chen F."/>
        </authorList>
    </citation>
    <scope>NUCLEOTIDE SEQUENCE [MRNA]</scope>
    <scope>INDUCTION</scope>
    <scope>FUNCTION</scope>
    <scope>CATALYTIC ACTIVITY</scope>
    <scope>DOMAIN</scope>
    <source>
        <strain>AX4</strain>
    </source>
</reference>
<reference key="2">
    <citation type="journal article" date="2005" name="Nature">
        <title>The genome of the social amoeba Dictyostelium discoideum.</title>
        <authorList>
            <person name="Eichinger L."/>
            <person name="Pachebat J.A."/>
            <person name="Gloeckner G."/>
            <person name="Rajandream M.A."/>
            <person name="Sucgang R."/>
            <person name="Berriman M."/>
            <person name="Song J."/>
            <person name="Olsen R."/>
            <person name="Szafranski K."/>
            <person name="Xu Q."/>
            <person name="Tunggal B."/>
            <person name="Kummerfeld S."/>
            <person name="Madera M."/>
            <person name="Konfortov B.A."/>
            <person name="Rivero F."/>
            <person name="Bankier A.T."/>
            <person name="Lehmann R."/>
            <person name="Hamlin N."/>
            <person name="Davies R."/>
            <person name="Gaudet P."/>
            <person name="Fey P."/>
            <person name="Pilcher K."/>
            <person name="Chen G."/>
            <person name="Saunders D."/>
            <person name="Sodergren E.J."/>
            <person name="Davis P."/>
            <person name="Kerhornou A."/>
            <person name="Nie X."/>
            <person name="Hall N."/>
            <person name="Anjard C."/>
            <person name="Hemphill L."/>
            <person name="Bason N."/>
            <person name="Farbrother P."/>
            <person name="Desany B."/>
            <person name="Just E."/>
            <person name="Morio T."/>
            <person name="Rost R."/>
            <person name="Churcher C.M."/>
            <person name="Cooper J."/>
            <person name="Haydock S."/>
            <person name="van Driessche N."/>
            <person name="Cronin A."/>
            <person name="Goodhead I."/>
            <person name="Muzny D.M."/>
            <person name="Mourier T."/>
            <person name="Pain A."/>
            <person name="Lu M."/>
            <person name="Harper D."/>
            <person name="Lindsay R."/>
            <person name="Hauser H."/>
            <person name="James K.D."/>
            <person name="Quiles M."/>
            <person name="Madan Babu M."/>
            <person name="Saito T."/>
            <person name="Buchrieser C."/>
            <person name="Wardroper A."/>
            <person name="Felder M."/>
            <person name="Thangavelu M."/>
            <person name="Johnson D."/>
            <person name="Knights A."/>
            <person name="Loulseged H."/>
            <person name="Mungall K.L."/>
            <person name="Oliver K."/>
            <person name="Price C."/>
            <person name="Quail M.A."/>
            <person name="Urushihara H."/>
            <person name="Hernandez J."/>
            <person name="Rabbinowitsch E."/>
            <person name="Steffen D."/>
            <person name="Sanders M."/>
            <person name="Ma J."/>
            <person name="Kohara Y."/>
            <person name="Sharp S."/>
            <person name="Simmonds M.N."/>
            <person name="Spiegler S."/>
            <person name="Tivey A."/>
            <person name="Sugano S."/>
            <person name="White B."/>
            <person name="Walker D."/>
            <person name="Woodward J.R."/>
            <person name="Winckler T."/>
            <person name="Tanaka Y."/>
            <person name="Shaulsky G."/>
            <person name="Schleicher M."/>
            <person name="Weinstock G.M."/>
            <person name="Rosenthal A."/>
            <person name="Cox E.C."/>
            <person name="Chisholm R.L."/>
            <person name="Gibbs R.A."/>
            <person name="Loomis W.F."/>
            <person name="Platzer M."/>
            <person name="Kay R.R."/>
            <person name="Williams J.G."/>
            <person name="Dear P.H."/>
            <person name="Noegel A.A."/>
            <person name="Barrell B.G."/>
            <person name="Kuspa A."/>
        </authorList>
    </citation>
    <scope>NUCLEOTIDE SEQUENCE [LARGE SCALE GENOMIC DNA]</scope>
    <source>
        <strain>AX4</strain>
    </source>
</reference>
<reference key="3">
    <citation type="journal article" date="2016" name="Angew. Chem. Int. Ed.">
        <title>Terpene cyclases from social amoebae.</title>
        <authorList>
            <person name="Rabe P."/>
            <person name="Rinkel J."/>
            <person name="Nubbemeyer B."/>
            <person name="Koellner T.G."/>
            <person name="Chen F."/>
            <person name="Dickschat J.S."/>
        </authorList>
    </citation>
    <scope>FUNCTION</scope>
    <scope>CATALYTIC ACTIVITY</scope>
</reference>
<name>TPS6_DICDI</name>
<accession>Q54P86</accession>
<organism>
    <name type="scientific">Dictyostelium discoideum</name>
    <name type="common">Social amoeba</name>
    <dbReference type="NCBI Taxonomy" id="44689"/>
    <lineage>
        <taxon>Eukaryota</taxon>
        <taxon>Amoebozoa</taxon>
        <taxon>Evosea</taxon>
        <taxon>Eumycetozoa</taxon>
        <taxon>Dictyostelia</taxon>
        <taxon>Dictyosteliales</taxon>
        <taxon>Dictyosteliaceae</taxon>
        <taxon>Dictyostelium</taxon>
    </lineage>
</organism>